<feature type="chain" id="PRO_0000321475" description="Thymidylate synthase">
    <location>
        <begin position="1"/>
        <end position="290"/>
    </location>
</feature>
<feature type="active site" description="Nucleophile" evidence="1">
    <location>
        <position position="172"/>
    </location>
</feature>
<feature type="binding site" description="in other chain" evidence="1">
    <location>
        <position position="31"/>
    </location>
    <ligand>
        <name>dUMP</name>
        <dbReference type="ChEBI" id="CHEBI:246422"/>
        <note>ligand shared between dimeric partners</note>
    </ligand>
</feature>
<feature type="binding site" evidence="1">
    <location>
        <position position="61"/>
    </location>
    <ligand>
        <name>(6R)-5,10-methylene-5,6,7,8-tetrahydrofolate</name>
        <dbReference type="ChEBI" id="CHEBI:15636"/>
    </ligand>
</feature>
<feature type="binding site" evidence="1">
    <location>
        <begin position="152"/>
        <end position="153"/>
    </location>
    <ligand>
        <name>dUMP</name>
        <dbReference type="ChEBI" id="CHEBI:246422"/>
        <note>ligand shared between dimeric partners</note>
    </ligand>
</feature>
<feature type="binding site" description="in other chain" evidence="1">
    <location>
        <begin position="192"/>
        <end position="195"/>
    </location>
    <ligand>
        <name>dUMP</name>
        <dbReference type="ChEBI" id="CHEBI:246422"/>
        <note>ligand shared between dimeric partners</note>
    </ligand>
</feature>
<feature type="binding site" evidence="1">
    <location>
        <position position="195"/>
    </location>
    <ligand>
        <name>(6R)-5,10-methylene-5,6,7,8-tetrahydrofolate</name>
        <dbReference type="ChEBI" id="CHEBI:15636"/>
    </ligand>
</feature>
<feature type="binding site" description="in other chain" evidence="1">
    <location>
        <position position="203"/>
    </location>
    <ligand>
        <name>dUMP</name>
        <dbReference type="ChEBI" id="CHEBI:246422"/>
        <note>ligand shared between dimeric partners</note>
    </ligand>
</feature>
<feature type="binding site" description="in other chain" evidence="1">
    <location>
        <begin position="233"/>
        <end position="235"/>
    </location>
    <ligand>
        <name>dUMP</name>
        <dbReference type="ChEBI" id="CHEBI:246422"/>
        <note>ligand shared between dimeric partners</note>
    </ligand>
</feature>
<feature type="binding site" evidence="1">
    <location>
        <position position="289"/>
    </location>
    <ligand>
        <name>(6R)-5,10-methylene-5,6,7,8-tetrahydrofolate</name>
        <dbReference type="ChEBI" id="CHEBI:15636"/>
    </ligand>
</feature>
<reference key="1">
    <citation type="submission" date="2006-03" db="EMBL/GenBank/DDBJ databases">
        <title>Complete sequence of chromosome of Psychrobacter cryohalolentis K5.</title>
        <authorList>
            <consortium name="US DOE Joint Genome Institute"/>
            <person name="Copeland A."/>
            <person name="Lucas S."/>
            <person name="Lapidus A."/>
            <person name="Barry K."/>
            <person name="Detter J.C."/>
            <person name="Glavina T."/>
            <person name="Hammon N."/>
            <person name="Israni S."/>
            <person name="Dalin E."/>
            <person name="Tice H."/>
            <person name="Pitluck S."/>
            <person name="Brettin T."/>
            <person name="Bruce D."/>
            <person name="Han C."/>
            <person name="Tapia R."/>
            <person name="Sims D.R."/>
            <person name="Gilna P."/>
            <person name="Schmutz J."/>
            <person name="Larimer F."/>
            <person name="Land M."/>
            <person name="Hauser L."/>
            <person name="Kyrpides N."/>
            <person name="Kim E."/>
            <person name="Richardson P."/>
        </authorList>
    </citation>
    <scope>NUCLEOTIDE SEQUENCE [LARGE SCALE GENOMIC DNA]</scope>
    <source>
        <strain>ATCC BAA-1226 / DSM 17306 / VKM B-2378 / K5</strain>
    </source>
</reference>
<name>TYSY_PSYCK</name>
<evidence type="ECO:0000255" key="1">
    <source>
        <dbReference type="HAMAP-Rule" id="MF_00008"/>
    </source>
</evidence>
<proteinExistence type="inferred from homology"/>
<comment type="function">
    <text evidence="1">Catalyzes the reductive methylation of 2'-deoxyuridine-5'-monophosphate (dUMP) to 2'-deoxythymidine-5'-monophosphate (dTMP) while utilizing 5,10-methylenetetrahydrofolate (mTHF) as the methyl donor and reductant in the reaction, yielding dihydrofolate (DHF) as a by-product. This enzymatic reaction provides an intracellular de novo source of dTMP, an essential precursor for DNA biosynthesis.</text>
</comment>
<comment type="catalytic activity">
    <reaction evidence="1">
        <text>dUMP + (6R)-5,10-methylene-5,6,7,8-tetrahydrofolate = 7,8-dihydrofolate + dTMP</text>
        <dbReference type="Rhea" id="RHEA:12104"/>
        <dbReference type="ChEBI" id="CHEBI:15636"/>
        <dbReference type="ChEBI" id="CHEBI:57451"/>
        <dbReference type="ChEBI" id="CHEBI:63528"/>
        <dbReference type="ChEBI" id="CHEBI:246422"/>
        <dbReference type="EC" id="2.1.1.45"/>
    </reaction>
</comment>
<comment type="pathway">
    <text evidence="1">Pyrimidine metabolism; dTTP biosynthesis.</text>
</comment>
<comment type="subunit">
    <text evidence="1">Homodimer.</text>
</comment>
<comment type="subcellular location">
    <subcellularLocation>
        <location evidence="1">Cytoplasm</location>
    </subcellularLocation>
</comment>
<comment type="similarity">
    <text evidence="1">Belongs to the thymidylate synthase family. Bacterial-type ThyA subfamily.</text>
</comment>
<gene>
    <name evidence="1" type="primary">thyA</name>
    <name type="ordered locus">Pcryo_2314</name>
</gene>
<keyword id="KW-0963">Cytoplasm</keyword>
<keyword id="KW-0489">Methyltransferase</keyword>
<keyword id="KW-0545">Nucleotide biosynthesis</keyword>
<keyword id="KW-0808">Transferase</keyword>
<organism>
    <name type="scientific">Psychrobacter cryohalolentis (strain ATCC BAA-1226 / DSM 17306 / VKM B-2378 / K5)</name>
    <dbReference type="NCBI Taxonomy" id="335284"/>
    <lineage>
        <taxon>Bacteria</taxon>
        <taxon>Pseudomonadati</taxon>
        <taxon>Pseudomonadota</taxon>
        <taxon>Gammaproteobacteria</taxon>
        <taxon>Moraxellales</taxon>
        <taxon>Moraxellaceae</taxon>
        <taxon>Psychrobacter</taxon>
    </lineage>
</organism>
<sequence length="290" mass="32621">MTMNSSIIKNEQAYLDLLRLVLNEGTEKGDRTGTGTLSHFGAQLRFNLADGFPLLTTKKVHLKSITYELLWFLNGSTHVDYLQQNGVRIWNEWATSEQTARFNRPAGDLGPIYGHQWRNYGATTTADGQYNSDGVDQIAQVVEQIKTNPNSRRLIVSGWNPGEADQVALPPCHTLFQFFVADNKLSCQLYQRSADLFLGVPFNIASYAMLTHMVAQVCNLEVGEFIWTGGDCHIYQNHREQVELQLTRSLYTLPTLALNPNVKDIFAFNYEDISVDGYESHPAIKAQVAV</sequence>
<dbReference type="EC" id="2.1.1.45" evidence="1"/>
<dbReference type="EMBL" id="CP000323">
    <property type="protein sequence ID" value="ABE76091.1"/>
    <property type="molecule type" value="Genomic_DNA"/>
</dbReference>
<dbReference type="RefSeq" id="WP_011514621.1">
    <property type="nucleotide sequence ID" value="NC_007969.1"/>
</dbReference>
<dbReference type="SMR" id="Q1Q8B2"/>
<dbReference type="STRING" id="335284.Pcryo_2314"/>
<dbReference type="KEGG" id="pcr:Pcryo_2314"/>
<dbReference type="eggNOG" id="COG0207">
    <property type="taxonomic scope" value="Bacteria"/>
</dbReference>
<dbReference type="HOGENOM" id="CLU_021669_0_2_6"/>
<dbReference type="UniPathway" id="UPA00575"/>
<dbReference type="Proteomes" id="UP000002425">
    <property type="component" value="Chromosome"/>
</dbReference>
<dbReference type="GO" id="GO:0005829">
    <property type="term" value="C:cytosol"/>
    <property type="evidence" value="ECO:0007669"/>
    <property type="project" value="TreeGrafter"/>
</dbReference>
<dbReference type="GO" id="GO:0004799">
    <property type="term" value="F:thymidylate synthase activity"/>
    <property type="evidence" value="ECO:0007669"/>
    <property type="project" value="UniProtKB-UniRule"/>
</dbReference>
<dbReference type="GO" id="GO:0006231">
    <property type="term" value="P:dTMP biosynthetic process"/>
    <property type="evidence" value="ECO:0007669"/>
    <property type="project" value="UniProtKB-UniRule"/>
</dbReference>
<dbReference type="GO" id="GO:0006235">
    <property type="term" value="P:dTTP biosynthetic process"/>
    <property type="evidence" value="ECO:0007669"/>
    <property type="project" value="UniProtKB-UniRule"/>
</dbReference>
<dbReference type="GO" id="GO:0032259">
    <property type="term" value="P:methylation"/>
    <property type="evidence" value="ECO:0007669"/>
    <property type="project" value="UniProtKB-KW"/>
</dbReference>
<dbReference type="CDD" id="cd00351">
    <property type="entry name" value="TS_Pyrimidine_HMase"/>
    <property type="match status" value="1"/>
</dbReference>
<dbReference type="FunFam" id="3.30.572.10:FF:000013">
    <property type="entry name" value="Thymidylate synthase"/>
    <property type="match status" value="1"/>
</dbReference>
<dbReference type="Gene3D" id="3.30.572.10">
    <property type="entry name" value="Thymidylate synthase/dCMP hydroxymethylase domain"/>
    <property type="match status" value="1"/>
</dbReference>
<dbReference type="HAMAP" id="MF_00008">
    <property type="entry name" value="Thymidy_synth_bact"/>
    <property type="match status" value="1"/>
</dbReference>
<dbReference type="InterPro" id="IPR045097">
    <property type="entry name" value="Thymidate_synth/dCMP_Mease"/>
</dbReference>
<dbReference type="InterPro" id="IPR023451">
    <property type="entry name" value="Thymidate_synth/dCMP_Mease_dom"/>
</dbReference>
<dbReference type="InterPro" id="IPR036926">
    <property type="entry name" value="Thymidate_synth/dCMP_Mease_sf"/>
</dbReference>
<dbReference type="InterPro" id="IPR000398">
    <property type="entry name" value="Thymidylate_synthase"/>
</dbReference>
<dbReference type="InterPro" id="IPR020940">
    <property type="entry name" value="Thymidylate_synthase_AS"/>
</dbReference>
<dbReference type="NCBIfam" id="NF002497">
    <property type="entry name" value="PRK01827.1-3"/>
    <property type="match status" value="1"/>
</dbReference>
<dbReference type="NCBIfam" id="TIGR03284">
    <property type="entry name" value="thym_sym"/>
    <property type="match status" value="1"/>
</dbReference>
<dbReference type="PANTHER" id="PTHR11548:SF9">
    <property type="entry name" value="THYMIDYLATE SYNTHASE"/>
    <property type="match status" value="1"/>
</dbReference>
<dbReference type="PANTHER" id="PTHR11548">
    <property type="entry name" value="THYMIDYLATE SYNTHASE 1"/>
    <property type="match status" value="1"/>
</dbReference>
<dbReference type="Pfam" id="PF00303">
    <property type="entry name" value="Thymidylat_synt"/>
    <property type="match status" value="1"/>
</dbReference>
<dbReference type="PRINTS" id="PR00108">
    <property type="entry name" value="THYMDSNTHASE"/>
</dbReference>
<dbReference type="SUPFAM" id="SSF55831">
    <property type="entry name" value="Thymidylate synthase/dCMP hydroxymethylase"/>
    <property type="match status" value="1"/>
</dbReference>
<dbReference type="PROSITE" id="PS00091">
    <property type="entry name" value="THYMIDYLATE_SYNTHASE"/>
    <property type="match status" value="1"/>
</dbReference>
<protein>
    <recommendedName>
        <fullName evidence="1">Thymidylate synthase</fullName>
        <shortName evidence="1">TS</shortName>
        <shortName evidence="1">TSase</shortName>
        <ecNumber evidence="1">2.1.1.45</ecNumber>
    </recommendedName>
</protein>
<accession>Q1Q8B2</accession>